<keyword id="KW-0574">Periplasm</keyword>
<keyword id="KW-0732">Signal</keyword>
<proteinExistence type="inferred from homology"/>
<dbReference type="EMBL" id="CP001233">
    <property type="protein sequence ID" value="ACP05559.1"/>
    <property type="molecule type" value="Genomic_DNA"/>
</dbReference>
<dbReference type="RefSeq" id="WP_000621906.1">
    <property type="nucleotide sequence ID" value="NC_012578.1"/>
</dbReference>
<dbReference type="SMR" id="C3LLY3"/>
<dbReference type="KEGG" id="vcm:VCM66_1243"/>
<dbReference type="HOGENOM" id="CLU_023403_2_0_6"/>
<dbReference type="UniPathway" id="UPA00637"/>
<dbReference type="Proteomes" id="UP000001217">
    <property type="component" value="Chromosome I"/>
</dbReference>
<dbReference type="GO" id="GO:0030288">
    <property type="term" value="C:outer membrane-bounded periplasmic space"/>
    <property type="evidence" value="ECO:0007669"/>
    <property type="project" value="TreeGrafter"/>
</dbReference>
<dbReference type="GO" id="GO:0030246">
    <property type="term" value="F:carbohydrate binding"/>
    <property type="evidence" value="ECO:0007669"/>
    <property type="project" value="InterPro"/>
</dbReference>
<dbReference type="GO" id="GO:0003824">
    <property type="term" value="F:catalytic activity"/>
    <property type="evidence" value="ECO:0007669"/>
    <property type="project" value="InterPro"/>
</dbReference>
<dbReference type="GO" id="GO:0051274">
    <property type="term" value="P:beta-glucan biosynthetic process"/>
    <property type="evidence" value="ECO:0007669"/>
    <property type="project" value="TreeGrafter"/>
</dbReference>
<dbReference type="FunFam" id="2.60.40.10:FF:001915">
    <property type="entry name" value="Glucans biosynthesis protein G"/>
    <property type="match status" value="1"/>
</dbReference>
<dbReference type="FunFam" id="2.70.98.10:FF:000001">
    <property type="entry name" value="Glucans biosynthesis protein G"/>
    <property type="match status" value="1"/>
</dbReference>
<dbReference type="Gene3D" id="2.70.98.10">
    <property type="match status" value="1"/>
</dbReference>
<dbReference type="Gene3D" id="2.60.40.10">
    <property type="entry name" value="Immunoglobulins"/>
    <property type="match status" value="1"/>
</dbReference>
<dbReference type="HAMAP" id="MF_01069">
    <property type="entry name" value="MdoG_OpgG"/>
    <property type="match status" value="1"/>
</dbReference>
<dbReference type="InterPro" id="IPR011013">
    <property type="entry name" value="Gal_mutarotase_sf_dom"/>
</dbReference>
<dbReference type="InterPro" id="IPR014718">
    <property type="entry name" value="GH-type_carb-bd"/>
</dbReference>
<dbReference type="InterPro" id="IPR014438">
    <property type="entry name" value="Glucan_biosyn_MdoG/MdoD"/>
</dbReference>
<dbReference type="InterPro" id="IPR007444">
    <property type="entry name" value="Glucan_biosyn_MdoG_C"/>
</dbReference>
<dbReference type="InterPro" id="IPR013783">
    <property type="entry name" value="Ig-like_fold"/>
</dbReference>
<dbReference type="InterPro" id="IPR014756">
    <property type="entry name" value="Ig_E-set"/>
</dbReference>
<dbReference type="InterPro" id="IPR023704">
    <property type="entry name" value="MdoG_OpgG"/>
</dbReference>
<dbReference type="PANTHER" id="PTHR30504">
    <property type="entry name" value="GLUCANS BIOSYNTHESIS PROTEIN"/>
    <property type="match status" value="1"/>
</dbReference>
<dbReference type="PANTHER" id="PTHR30504:SF2">
    <property type="entry name" value="GLUCANS BIOSYNTHESIS PROTEIN G"/>
    <property type="match status" value="1"/>
</dbReference>
<dbReference type="Pfam" id="PF04349">
    <property type="entry name" value="MdoG"/>
    <property type="match status" value="1"/>
</dbReference>
<dbReference type="PIRSF" id="PIRSF006281">
    <property type="entry name" value="MdoG"/>
    <property type="match status" value="1"/>
</dbReference>
<dbReference type="SUPFAM" id="SSF81296">
    <property type="entry name" value="E set domains"/>
    <property type="match status" value="1"/>
</dbReference>
<dbReference type="SUPFAM" id="SSF74650">
    <property type="entry name" value="Galactose mutarotase-like"/>
    <property type="match status" value="1"/>
</dbReference>
<feature type="signal peptide" evidence="1">
    <location>
        <begin position="1"/>
        <end position="35"/>
    </location>
</feature>
<feature type="chain" id="PRO_1000149749" description="Glucans biosynthesis protein G">
    <location>
        <begin position="36"/>
        <end position="545"/>
    </location>
</feature>
<comment type="function">
    <text evidence="1">Involved in the biosynthesis of osmoregulated periplasmic glucans (OPGs).</text>
</comment>
<comment type="pathway">
    <text evidence="1">Glycan metabolism; osmoregulated periplasmic glucan (OPG) biosynthesis.</text>
</comment>
<comment type="subcellular location">
    <subcellularLocation>
        <location evidence="1">Periplasm</location>
    </subcellularLocation>
</comment>
<comment type="similarity">
    <text evidence="1">Belongs to the OpgD/OpgG family.</text>
</comment>
<organism>
    <name type="scientific">Vibrio cholerae serotype O1 (strain M66-2)</name>
    <dbReference type="NCBI Taxonomy" id="579112"/>
    <lineage>
        <taxon>Bacteria</taxon>
        <taxon>Pseudomonadati</taxon>
        <taxon>Pseudomonadota</taxon>
        <taxon>Gammaproteobacteria</taxon>
        <taxon>Vibrionales</taxon>
        <taxon>Vibrionaceae</taxon>
        <taxon>Vibrio</taxon>
    </lineage>
</organism>
<evidence type="ECO:0000255" key="1">
    <source>
        <dbReference type="HAMAP-Rule" id="MF_01069"/>
    </source>
</evidence>
<sequence length="545" mass="60874">MIRVSSAVQRHAQKLIVLFSLLFGASLLMSDNGFATDIKNTNASSPVNSESTKPTKAGEVKNVVRFAKTGSFDNDTVVRLARQLAKKPYVALKDPLPESLANISYDEYRDIRFKPDSAVWKADGLPYQMQLFHRGFFFQDLIEIALVEGNQATHLSYDPNMFTAGEVLQQNLPTEDIGYSGLRVHYPLNSPSYFDELFVFQGASYFRALGKGNAYGLSARGLAIKTADPAGEEFPIFRAFWVEKPNYDTNLIVVHALLDSPSVSGAYRFSIRPGENTRMDVEAVLFPRVELSKVGLAPATSMFMHSPNGREKTDDFRPSVHDSDGLLMINGRGERLWRPLANPSTLQVSAFMDNSPQGFGLMQRERDYANYQDLEAHYEKRPSLWVEPVGNWGPGAVVLTEIPTQSEIHDNIVAFWKPAQPLAAGSEYRFSYHLNWGAQPEANPQAITVSRTASGRADIAKPTPKRLFVIDYQVQGAKPAQMPEPKVRSNAGVISNVVLRDNPANNGYRLSFEFDPGEVTLAELRAELTLQEARPVETWLYRWTL</sequence>
<accession>C3LLY3</accession>
<gene>
    <name evidence="1" type="primary">opgG</name>
    <name type="ordered locus">VCM66_1243</name>
</gene>
<protein>
    <recommendedName>
        <fullName evidence="1">Glucans biosynthesis protein G</fullName>
    </recommendedName>
</protein>
<reference key="1">
    <citation type="journal article" date="2008" name="PLoS ONE">
        <title>A recalibrated molecular clock and independent origins for the cholera pandemic clones.</title>
        <authorList>
            <person name="Feng L."/>
            <person name="Reeves P.R."/>
            <person name="Lan R."/>
            <person name="Ren Y."/>
            <person name="Gao C."/>
            <person name="Zhou Z."/>
            <person name="Ren Y."/>
            <person name="Cheng J."/>
            <person name="Wang W."/>
            <person name="Wang J."/>
            <person name="Qian W."/>
            <person name="Li D."/>
            <person name="Wang L."/>
        </authorList>
    </citation>
    <scope>NUCLEOTIDE SEQUENCE [LARGE SCALE GENOMIC DNA]</scope>
    <source>
        <strain>M66-2</strain>
    </source>
</reference>
<name>OPGG_VIBCM</name>